<reference key="1">
    <citation type="journal article" date="2005" name="Thromb. Haemost.">
        <title>Crotalid venom vascular endothelial growth factors has preferential affinity for VEGFR-1. Characterization of Protobothrops mucrosquamatus venom VEGF.</title>
        <authorList>
            <person name="Chen Y.-L."/>
            <person name="Tsai I.-H."/>
            <person name="Hong T.-M."/>
            <person name="Tsai S.-H."/>
        </authorList>
    </citation>
    <scope>NUCLEOTIDE SEQUENCE [MRNA]</scope>
    <scope>FUNCTION</scope>
    <scope>SUBUNIT</scope>
    <scope>SUBCELLULAR LOCATION</scope>
    <scope>INTERACTION WITH FLT1 AND KDR</scope>
    <source>
        <tissue>Venom gland</tissue>
    </source>
</reference>
<accession>Q330K6</accession>
<organism>
    <name type="scientific">Protobothrops mucrosquamatus</name>
    <name type="common">Taiwan habu</name>
    <name type="synonym">Trimeresurus mucrosquamatus</name>
    <dbReference type="NCBI Taxonomy" id="103944"/>
    <lineage>
        <taxon>Eukaryota</taxon>
        <taxon>Metazoa</taxon>
        <taxon>Chordata</taxon>
        <taxon>Craniata</taxon>
        <taxon>Vertebrata</taxon>
        <taxon>Euteleostomi</taxon>
        <taxon>Lepidosauria</taxon>
        <taxon>Squamata</taxon>
        <taxon>Bifurcata</taxon>
        <taxon>Unidentata</taxon>
        <taxon>Episquamata</taxon>
        <taxon>Toxicofera</taxon>
        <taxon>Serpentes</taxon>
        <taxon>Colubroidea</taxon>
        <taxon>Viperidae</taxon>
        <taxon>Crotalinae</taxon>
        <taxon>Protobothrops</taxon>
    </lineage>
</organism>
<feature type="signal peptide" evidence="5">
    <location>
        <begin position="1"/>
        <end position="24"/>
    </location>
</feature>
<feature type="chain" id="PRO_5000092370" description="Snake venom vascular endothelial growth factor toxin">
    <location>
        <begin position="25"/>
        <end position="143"/>
    </location>
</feature>
<feature type="region of interest" description="Disordered" evidence="6">
    <location>
        <begin position="117"/>
        <end position="143"/>
    </location>
</feature>
<feature type="modified residue" description="Pyrrolidone carboxylic acid (Glu)" evidence="1">
    <location>
        <position position="25"/>
    </location>
</feature>
<feature type="disulfide bond" evidence="3">
    <location>
        <begin position="38"/>
        <end position="80"/>
    </location>
</feature>
<feature type="disulfide bond" description="Interchain (with C-72)" evidence="3">
    <location>
        <position position="63"/>
    </location>
</feature>
<feature type="disulfide bond" evidence="3">
    <location>
        <begin position="69"/>
        <end position="115"/>
    </location>
</feature>
<feature type="disulfide bond" description="Interchain (with C-63)" evidence="3">
    <location>
        <position position="72"/>
    </location>
</feature>
<feature type="disulfide bond" evidence="3">
    <location>
        <begin position="73"/>
        <end position="117"/>
    </location>
</feature>
<sequence length="143" mass="15925">MAVYLLAVAILFCIQGWPSGTVQGEVMPFMEVYDRSACQTREMLVPILKEYPNEVSHLFKPSCVPVLRCGGCCSDESLTCTATGKRSVGREVMRVDPHKGTSKIEVMQFKEHTACECRPRSPGDVNDGRNPKEGEPRARFPFV</sequence>
<comment type="function">
    <text evidence="7">Snake venom VEGFs may contribute to venom dispersion and prey subjugation by inducing vascular permeability and hypotension. This protein activates the vascular endothelial growth factor receptor-1 (VEGFR-1/FLT1), and consequently promotes the proliferation and tissue factor production of endothelial cells, the neovascularization in the chicken chorioallantoic membrane, and increases vascular permeability. Also stimulates tissue-factor production and human monocyte chemotaxis.</text>
</comment>
<comment type="subunit">
    <text evidence="4 7">Homodimer; disulfide-linked (By similarity). Interacts with VEGF receptor-1 (FLT1) with a high affinity, whereas it binds to VEGF receptor-2 (KDR) with a low affinity. Does not bind to VEGFR-3/FLT4 and neuropilin-1 (NRP1) (PubMed:15711751).</text>
</comment>
<comment type="subcellular location">
    <subcellularLocation>
        <location evidence="7">Secreted</location>
    </subcellularLocation>
</comment>
<comment type="tissue specificity">
    <text evidence="9">Expressed by the venom gland.</text>
</comment>
<comment type="similarity">
    <text evidence="8">Belongs to the PDGF/VEGF growth factor family. Snake venom VEGF subfamily.</text>
</comment>
<name>TXVE2_PROMU</name>
<dbReference type="EMBL" id="AY442328">
    <property type="protein sequence ID" value="AAS07632.1"/>
    <property type="molecule type" value="mRNA"/>
</dbReference>
<dbReference type="RefSeq" id="XP_015676137.1">
    <property type="nucleotide sequence ID" value="XM_015820651.2"/>
</dbReference>
<dbReference type="SMR" id="Q330K6"/>
<dbReference type="GeneID" id="107291631"/>
<dbReference type="KEGG" id="pmur:107291631"/>
<dbReference type="OMA" id="EAHECHP"/>
<dbReference type="OrthoDB" id="6370328at2759"/>
<dbReference type="GO" id="GO:0005615">
    <property type="term" value="C:extracellular space"/>
    <property type="evidence" value="ECO:0000314"/>
    <property type="project" value="UniProtKB"/>
</dbReference>
<dbReference type="GO" id="GO:0016020">
    <property type="term" value="C:membrane"/>
    <property type="evidence" value="ECO:0007669"/>
    <property type="project" value="InterPro"/>
</dbReference>
<dbReference type="GO" id="GO:0042056">
    <property type="term" value="F:chemoattractant activity"/>
    <property type="evidence" value="ECO:0007669"/>
    <property type="project" value="TreeGrafter"/>
</dbReference>
<dbReference type="GO" id="GO:0008083">
    <property type="term" value="F:growth factor activity"/>
    <property type="evidence" value="ECO:0007669"/>
    <property type="project" value="UniProtKB-KW"/>
</dbReference>
<dbReference type="GO" id="GO:0090729">
    <property type="term" value="F:toxin activity"/>
    <property type="evidence" value="ECO:0007669"/>
    <property type="project" value="UniProtKB-KW"/>
</dbReference>
<dbReference type="GO" id="GO:0005172">
    <property type="term" value="F:vascular endothelial growth factor receptor binding"/>
    <property type="evidence" value="ECO:0007669"/>
    <property type="project" value="TreeGrafter"/>
</dbReference>
<dbReference type="GO" id="GO:0050930">
    <property type="term" value="P:induction of positive chemotaxis"/>
    <property type="evidence" value="ECO:0007669"/>
    <property type="project" value="TreeGrafter"/>
</dbReference>
<dbReference type="GO" id="GO:0045766">
    <property type="term" value="P:positive regulation of angiogenesis"/>
    <property type="evidence" value="ECO:0007669"/>
    <property type="project" value="TreeGrafter"/>
</dbReference>
<dbReference type="GO" id="GO:0001938">
    <property type="term" value="P:positive regulation of endothelial cell proliferation"/>
    <property type="evidence" value="ECO:0007669"/>
    <property type="project" value="TreeGrafter"/>
</dbReference>
<dbReference type="GO" id="GO:0060754">
    <property type="term" value="P:positive regulation of mast cell chemotaxis"/>
    <property type="evidence" value="ECO:0007669"/>
    <property type="project" value="TreeGrafter"/>
</dbReference>
<dbReference type="GO" id="GO:0001666">
    <property type="term" value="P:response to hypoxia"/>
    <property type="evidence" value="ECO:0007669"/>
    <property type="project" value="TreeGrafter"/>
</dbReference>
<dbReference type="GO" id="GO:0002040">
    <property type="term" value="P:sprouting angiogenesis"/>
    <property type="evidence" value="ECO:0007669"/>
    <property type="project" value="TreeGrafter"/>
</dbReference>
<dbReference type="GO" id="GO:0048010">
    <property type="term" value="P:vascular endothelial growth factor receptor signaling pathway"/>
    <property type="evidence" value="ECO:0007669"/>
    <property type="project" value="TreeGrafter"/>
</dbReference>
<dbReference type="GO" id="GO:0038084">
    <property type="term" value="P:vascular endothelial growth factor signaling pathway"/>
    <property type="evidence" value="ECO:0007669"/>
    <property type="project" value="TreeGrafter"/>
</dbReference>
<dbReference type="CDD" id="cd00135">
    <property type="entry name" value="PDGF"/>
    <property type="match status" value="1"/>
</dbReference>
<dbReference type="FunFam" id="2.10.90.10:FF:000030">
    <property type="entry name" value="Vascular endothelial growth factor B"/>
    <property type="match status" value="1"/>
</dbReference>
<dbReference type="Gene3D" id="2.10.90.10">
    <property type="entry name" value="Cystine-knot cytokines"/>
    <property type="match status" value="1"/>
</dbReference>
<dbReference type="InterPro" id="IPR029034">
    <property type="entry name" value="Cystine-knot_cytokine"/>
</dbReference>
<dbReference type="InterPro" id="IPR023581">
    <property type="entry name" value="PD_growth_factor_CS"/>
</dbReference>
<dbReference type="InterPro" id="IPR000072">
    <property type="entry name" value="PDGF/VEGF_dom"/>
</dbReference>
<dbReference type="InterPro" id="IPR050507">
    <property type="entry name" value="PDGF/VEGF_growth_factor"/>
</dbReference>
<dbReference type="PANTHER" id="PTHR12025">
    <property type="entry name" value="VASCULAR ENDOTHELIAL GROWTH FACTOR"/>
    <property type="match status" value="1"/>
</dbReference>
<dbReference type="PANTHER" id="PTHR12025:SF5">
    <property type="entry name" value="VASCULAR ENDOTHELIAL GROWTH FACTOR A, LONG FORM"/>
    <property type="match status" value="1"/>
</dbReference>
<dbReference type="Pfam" id="PF00341">
    <property type="entry name" value="PDGF"/>
    <property type="match status" value="1"/>
</dbReference>
<dbReference type="SMART" id="SM00141">
    <property type="entry name" value="PDGF"/>
    <property type="match status" value="1"/>
</dbReference>
<dbReference type="SUPFAM" id="SSF57501">
    <property type="entry name" value="Cystine-knot cytokines"/>
    <property type="match status" value="1"/>
</dbReference>
<dbReference type="PROSITE" id="PS00249">
    <property type="entry name" value="PDGF_1"/>
    <property type="match status" value="1"/>
</dbReference>
<dbReference type="PROSITE" id="PS50278">
    <property type="entry name" value="PDGF_2"/>
    <property type="match status" value="1"/>
</dbReference>
<evidence type="ECO:0000250" key="1">
    <source>
        <dbReference type="UniProtKB" id="P0DL42"/>
    </source>
</evidence>
<evidence type="ECO:0000250" key="2">
    <source>
        <dbReference type="UniProtKB" id="P67862"/>
    </source>
</evidence>
<evidence type="ECO:0000250" key="3">
    <source>
        <dbReference type="UniProtKB" id="P67863"/>
    </source>
</evidence>
<evidence type="ECO:0000250" key="4">
    <source>
        <dbReference type="UniProtKB" id="P82475"/>
    </source>
</evidence>
<evidence type="ECO:0000255" key="5"/>
<evidence type="ECO:0000256" key="6">
    <source>
        <dbReference type="SAM" id="MobiDB-lite"/>
    </source>
</evidence>
<evidence type="ECO:0000269" key="7">
    <source>
    </source>
</evidence>
<evidence type="ECO:0000305" key="8"/>
<evidence type="ECO:0000305" key="9">
    <source>
    </source>
</evidence>
<protein>
    <recommendedName>
        <fullName>Snake venom vascular endothelial growth factor toxin</fullName>
        <shortName>svVEGF</shortName>
    </recommendedName>
    <alternativeName>
        <fullName>PM-VEGF</fullName>
    </alternativeName>
    <alternativeName>
        <fullName>TM-VEGF</fullName>
    </alternativeName>
    <alternativeName>
        <fullName evidence="2">VEGF-F</fullName>
    </alternativeName>
</protein>
<proteinExistence type="evidence at protein level"/>
<keyword id="KW-1015">Disulfide bond</keyword>
<keyword id="KW-0339">Growth factor</keyword>
<keyword id="KW-0873">Pyrrolidone carboxylic acid</keyword>
<keyword id="KW-0964">Secreted</keyword>
<keyword id="KW-0732">Signal</keyword>
<keyword id="KW-0800">Toxin</keyword>